<keyword id="KW-0047">Antifreeze protein</keyword>
<keyword id="KW-0903">Direct protein sequencing</keyword>
<keyword id="KW-0677">Repeat</keyword>
<keyword id="KW-0964">Secreted</keyword>
<keyword id="KW-0732">Signal</keyword>
<name>ANP_MYZFE</name>
<reference key="1">
    <citation type="journal article" date="1987" name="Eur. J. Biochem.">
        <title>Structural variations in the alanine-rich antifreeze proteins of the pleuronectinae.</title>
        <authorList>
            <person name="Scott G.K."/>
            <person name="Davies P.L."/>
            <person name="Shears M.A."/>
            <person name="Fletcher G.L."/>
        </authorList>
    </citation>
    <scope>NUCLEOTIDE SEQUENCE [MRNA]</scope>
    <scope>PARTIAL PROTEIN SEQUENCE</scope>
    <scope>FUNCTION</scope>
    <scope>SUBCELLULAR LOCATION</scope>
    <scope>TISSUE SPECIFICITY</scope>
</reference>
<protein>
    <recommendedName>
        <fullName>Ice-structuring protein</fullName>
        <shortName>ISP</shortName>
    </recommendedName>
    <alternativeName>
        <fullName>Antifreeze protein</fullName>
        <shortName>AFP</shortName>
    </alternativeName>
</protein>
<evidence type="ECO:0000269" key="1">
    <source>
    </source>
</evidence>
<evidence type="ECO:0000305" key="2"/>
<proteinExistence type="evidence at protein level"/>
<dbReference type="EMBL" id="X06356">
    <property type="protein sequence ID" value="CAA29655.1"/>
    <property type="molecule type" value="mRNA"/>
</dbReference>
<dbReference type="PIR" id="S02376">
    <property type="entry name" value="S02376"/>
</dbReference>
<dbReference type="SMR" id="P09031"/>
<dbReference type="GO" id="GO:0005576">
    <property type="term" value="C:extracellular region"/>
    <property type="evidence" value="ECO:0007669"/>
    <property type="project" value="UniProtKB-SubCell"/>
</dbReference>
<dbReference type="GO" id="GO:0016172">
    <property type="term" value="F:antifreeze activity"/>
    <property type="evidence" value="ECO:0007669"/>
    <property type="project" value="InterPro"/>
</dbReference>
<dbReference type="InterPro" id="IPR000104">
    <property type="entry name" value="Antifreeze_1"/>
</dbReference>
<dbReference type="PRINTS" id="PR00308">
    <property type="entry name" value="ANTIFREEZEI"/>
</dbReference>
<feature type="signal peptide">
    <location>
        <begin position="1"/>
        <end position="23"/>
    </location>
</feature>
<feature type="propeptide" id="PRO_0000001682" description="Removed by a dipeptidylpeptidase" evidence="2">
    <location>
        <begin position="24"/>
        <end position="48"/>
    </location>
</feature>
<feature type="chain" id="PRO_0000001683" description="Ice-structuring protein">
    <location>
        <begin position="49"/>
        <end position="97"/>
    </location>
</feature>
<sequence>MALSLFTVGQLIFLFWTLRITEANPDPAAKAAPAAVADPAAAAAAAVADTASDAAAAAAATAAAAAKAAADTAAAAAKAAADTAAAAAEAAAATARG</sequence>
<organism>
    <name type="scientific">Myzopsetta ferruginea</name>
    <name type="common">Yellowtail flounder</name>
    <name type="synonym">Platessa ferruginea</name>
    <dbReference type="NCBI Taxonomy" id="8258"/>
    <lineage>
        <taxon>Eukaryota</taxon>
        <taxon>Metazoa</taxon>
        <taxon>Chordata</taxon>
        <taxon>Craniata</taxon>
        <taxon>Vertebrata</taxon>
        <taxon>Euteleostomi</taxon>
        <taxon>Actinopterygii</taxon>
        <taxon>Neopterygii</taxon>
        <taxon>Teleostei</taxon>
        <taxon>Neoteleostei</taxon>
        <taxon>Acanthomorphata</taxon>
        <taxon>Carangaria</taxon>
        <taxon>Pleuronectiformes</taxon>
        <taxon>Pleuronectoidei</taxon>
        <taxon>Pleuronectidae</taxon>
        <taxon>Myzopsetta</taxon>
    </lineage>
</organism>
<accession>P09031</accession>
<comment type="function">
    <text evidence="1">Contributes to protect fish blood from freezing at subzero sea water temperatures. Lowers the blood freezing point. Binds to nascent ice crystals and prevents further growth.</text>
</comment>
<comment type="subcellular location">
    <subcellularLocation>
        <location evidence="1">Secreted</location>
    </subcellularLocation>
</comment>
<comment type="tissue specificity">
    <text evidence="1">Detected in blood serum (at protein level).</text>
</comment>
<comment type="similarity">
    <text evidence="2">Belongs to the type-I AFP family.</text>
</comment>